<accession>C1C9H6</accession>
<gene>
    <name evidence="1" type="primary">groEL</name>
    <name evidence="1" type="synonym">groL</name>
    <name type="ordered locus">SP70585_1987</name>
</gene>
<keyword id="KW-0067">ATP-binding</keyword>
<keyword id="KW-0143">Chaperone</keyword>
<keyword id="KW-0963">Cytoplasm</keyword>
<keyword id="KW-0413">Isomerase</keyword>
<keyword id="KW-0547">Nucleotide-binding</keyword>
<dbReference type="EC" id="5.6.1.7" evidence="1"/>
<dbReference type="EMBL" id="CP000918">
    <property type="protein sequence ID" value="ACO17217.1"/>
    <property type="molecule type" value="Genomic_DNA"/>
</dbReference>
<dbReference type="RefSeq" id="WP_000031573.1">
    <property type="nucleotide sequence ID" value="NC_012468.1"/>
</dbReference>
<dbReference type="SMR" id="C1C9H6"/>
<dbReference type="GeneID" id="45652869"/>
<dbReference type="KEGG" id="snm:SP70585_1987"/>
<dbReference type="HOGENOM" id="CLU_016503_3_0_9"/>
<dbReference type="Proteomes" id="UP000002211">
    <property type="component" value="Chromosome"/>
</dbReference>
<dbReference type="GO" id="GO:0005737">
    <property type="term" value="C:cytoplasm"/>
    <property type="evidence" value="ECO:0007669"/>
    <property type="project" value="UniProtKB-SubCell"/>
</dbReference>
<dbReference type="GO" id="GO:0005524">
    <property type="term" value="F:ATP binding"/>
    <property type="evidence" value="ECO:0007669"/>
    <property type="project" value="UniProtKB-UniRule"/>
</dbReference>
<dbReference type="GO" id="GO:0140662">
    <property type="term" value="F:ATP-dependent protein folding chaperone"/>
    <property type="evidence" value="ECO:0007669"/>
    <property type="project" value="InterPro"/>
</dbReference>
<dbReference type="GO" id="GO:0016853">
    <property type="term" value="F:isomerase activity"/>
    <property type="evidence" value="ECO:0007669"/>
    <property type="project" value="UniProtKB-KW"/>
</dbReference>
<dbReference type="GO" id="GO:0051082">
    <property type="term" value="F:unfolded protein binding"/>
    <property type="evidence" value="ECO:0007669"/>
    <property type="project" value="UniProtKB-UniRule"/>
</dbReference>
<dbReference type="GO" id="GO:0042026">
    <property type="term" value="P:protein refolding"/>
    <property type="evidence" value="ECO:0007669"/>
    <property type="project" value="UniProtKB-UniRule"/>
</dbReference>
<dbReference type="CDD" id="cd03344">
    <property type="entry name" value="GroEL"/>
    <property type="match status" value="1"/>
</dbReference>
<dbReference type="FunFam" id="1.10.560.10:FF:000001">
    <property type="entry name" value="60 kDa chaperonin"/>
    <property type="match status" value="1"/>
</dbReference>
<dbReference type="FunFam" id="3.50.7.10:FF:000001">
    <property type="entry name" value="60 kDa chaperonin"/>
    <property type="match status" value="1"/>
</dbReference>
<dbReference type="Gene3D" id="3.50.7.10">
    <property type="entry name" value="GroEL"/>
    <property type="match status" value="1"/>
</dbReference>
<dbReference type="Gene3D" id="1.10.560.10">
    <property type="entry name" value="GroEL-like equatorial domain"/>
    <property type="match status" value="1"/>
</dbReference>
<dbReference type="Gene3D" id="3.30.260.10">
    <property type="entry name" value="TCP-1-like chaperonin intermediate domain"/>
    <property type="match status" value="1"/>
</dbReference>
<dbReference type="HAMAP" id="MF_00600">
    <property type="entry name" value="CH60"/>
    <property type="match status" value="1"/>
</dbReference>
<dbReference type="InterPro" id="IPR018370">
    <property type="entry name" value="Chaperonin_Cpn60_CS"/>
</dbReference>
<dbReference type="InterPro" id="IPR001844">
    <property type="entry name" value="Cpn60/GroEL"/>
</dbReference>
<dbReference type="InterPro" id="IPR002423">
    <property type="entry name" value="Cpn60/GroEL/TCP-1"/>
</dbReference>
<dbReference type="InterPro" id="IPR027409">
    <property type="entry name" value="GroEL-like_apical_dom_sf"/>
</dbReference>
<dbReference type="InterPro" id="IPR027413">
    <property type="entry name" value="GROEL-like_equatorial_sf"/>
</dbReference>
<dbReference type="InterPro" id="IPR027410">
    <property type="entry name" value="TCP-1-like_intermed_sf"/>
</dbReference>
<dbReference type="NCBIfam" id="TIGR02348">
    <property type="entry name" value="GroEL"/>
    <property type="match status" value="1"/>
</dbReference>
<dbReference type="NCBIfam" id="NF000592">
    <property type="entry name" value="PRK00013.1"/>
    <property type="match status" value="1"/>
</dbReference>
<dbReference type="NCBIfam" id="NF009487">
    <property type="entry name" value="PRK12849.1"/>
    <property type="match status" value="1"/>
</dbReference>
<dbReference type="NCBIfam" id="NF009488">
    <property type="entry name" value="PRK12850.1"/>
    <property type="match status" value="1"/>
</dbReference>
<dbReference type="NCBIfam" id="NF009489">
    <property type="entry name" value="PRK12851.1"/>
    <property type="match status" value="1"/>
</dbReference>
<dbReference type="PANTHER" id="PTHR45633">
    <property type="entry name" value="60 KDA HEAT SHOCK PROTEIN, MITOCHONDRIAL"/>
    <property type="match status" value="1"/>
</dbReference>
<dbReference type="Pfam" id="PF00118">
    <property type="entry name" value="Cpn60_TCP1"/>
    <property type="match status" value="1"/>
</dbReference>
<dbReference type="PRINTS" id="PR00298">
    <property type="entry name" value="CHAPERONIN60"/>
</dbReference>
<dbReference type="SUPFAM" id="SSF52029">
    <property type="entry name" value="GroEL apical domain-like"/>
    <property type="match status" value="1"/>
</dbReference>
<dbReference type="SUPFAM" id="SSF48592">
    <property type="entry name" value="GroEL equatorial domain-like"/>
    <property type="match status" value="1"/>
</dbReference>
<dbReference type="SUPFAM" id="SSF54849">
    <property type="entry name" value="GroEL-intermediate domain like"/>
    <property type="match status" value="1"/>
</dbReference>
<dbReference type="PROSITE" id="PS00296">
    <property type="entry name" value="CHAPERONINS_CPN60"/>
    <property type="match status" value="1"/>
</dbReference>
<organism>
    <name type="scientific">Streptococcus pneumoniae (strain 70585)</name>
    <dbReference type="NCBI Taxonomy" id="488221"/>
    <lineage>
        <taxon>Bacteria</taxon>
        <taxon>Bacillati</taxon>
        <taxon>Bacillota</taxon>
        <taxon>Bacilli</taxon>
        <taxon>Lactobacillales</taxon>
        <taxon>Streptococcaceae</taxon>
        <taxon>Streptococcus</taxon>
    </lineage>
</organism>
<feature type="chain" id="PRO_1000147044" description="Chaperonin GroEL">
    <location>
        <begin position="1"/>
        <end position="540"/>
    </location>
</feature>
<feature type="binding site" evidence="1">
    <location>
        <begin position="29"/>
        <end position="32"/>
    </location>
    <ligand>
        <name>ATP</name>
        <dbReference type="ChEBI" id="CHEBI:30616"/>
    </ligand>
</feature>
<feature type="binding site" evidence="1">
    <location>
        <begin position="86"/>
        <end position="90"/>
    </location>
    <ligand>
        <name>ATP</name>
        <dbReference type="ChEBI" id="CHEBI:30616"/>
    </ligand>
</feature>
<feature type="binding site" evidence="1">
    <location>
        <position position="413"/>
    </location>
    <ligand>
        <name>ATP</name>
        <dbReference type="ChEBI" id="CHEBI:30616"/>
    </ligand>
</feature>
<feature type="binding site" evidence="1">
    <location>
        <begin position="476"/>
        <end position="478"/>
    </location>
    <ligand>
        <name>ATP</name>
        <dbReference type="ChEBI" id="CHEBI:30616"/>
    </ligand>
</feature>
<feature type="binding site" evidence="1">
    <location>
        <position position="492"/>
    </location>
    <ligand>
        <name>ATP</name>
        <dbReference type="ChEBI" id="CHEBI:30616"/>
    </ligand>
</feature>
<evidence type="ECO:0000255" key="1">
    <source>
        <dbReference type="HAMAP-Rule" id="MF_00600"/>
    </source>
</evidence>
<name>CH60_STRP7</name>
<proteinExistence type="inferred from homology"/>
<comment type="function">
    <text evidence="1">Together with its co-chaperonin GroES, plays an essential role in assisting protein folding. The GroEL-GroES system forms a nano-cage that allows encapsulation of the non-native substrate proteins and provides a physical environment optimized to promote and accelerate protein folding.</text>
</comment>
<comment type="catalytic activity">
    <reaction evidence="1">
        <text>ATP + H2O + a folded polypeptide = ADP + phosphate + an unfolded polypeptide.</text>
        <dbReference type="EC" id="5.6.1.7"/>
    </reaction>
</comment>
<comment type="subunit">
    <text evidence="1">Forms a cylinder of 14 subunits composed of two heptameric rings stacked back-to-back. Interacts with the co-chaperonin GroES.</text>
</comment>
<comment type="subcellular location">
    <subcellularLocation>
        <location evidence="1">Cytoplasm</location>
    </subcellularLocation>
</comment>
<comment type="similarity">
    <text evidence="1">Belongs to the chaperonin (HSP60) family.</text>
</comment>
<reference key="1">
    <citation type="journal article" date="2010" name="Genome Biol.">
        <title>Structure and dynamics of the pan-genome of Streptococcus pneumoniae and closely related species.</title>
        <authorList>
            <person name="Donati C."/>
            <person name="Hiller N.L."/>
            <person name="Tettelin H."/>
            <person name="Muzzi A."/>
            <person name="Croucher N.J."/>
            <person name="Angiuoli S.V."/>
            <person name="Oggioni M."/>
            <person name="Dunning Hotopp J.C."/>
            <person name="Hu F.Z."/>
            <person name="Riley D.R."/>
            <person name="Covacci A."/>
            <person name="Mitchell T.J."/>
            <person name="Bentley S.D."/>
            <person name="Kilian M."/>
            <person name="Ehrlich G.D."/>
            <person name="Rappuoli R."/>
            <person name="Moxon E.R."/>
            <person name="Masignani V."/>
        </authorList>
    </citation>
    <scope>NUCLEOTIDE SEQUENCE [LARGE SCALE GENOMIC DNA]</scope>
    <source>
        <strain>70585</strain>
    </source>
</reference>
<sequence>MSKEIKFSSDARSAMVRGVDILADTVKVTLGPKGRNVVLEKSFGSPLITNDGVTIAKEIELEDHFENMGAKLVSEVASKTNDIAGDGTTTATVLTQAIVREGIKNVTAGANPIGIRRGIETAVAAAVEALKNNAIPVANKEAIAQVAAVSSRSEKVGEYISEAMEKVGKDGVITIEESRGMETELEVVEGMQFDRGYLSQYMVTDSEKMVADLENPYILITDKKISNIQEILPLLESILQSNRPLLIIADDVDGEALPTLVLNKIRGTFNVVAVKAPGFGDRRKAMLEDIAILTGGTVITEDLGLELKDATIEALGQAARVTVDKDSTVIVEGAGNPEAISHRVAVIKSQIETTTSEFDREKLQERLAKLSGGVAVIKVGAATETELKEMKLRIEDALNATRAAVEEGIVAGGGTALANVIPAVATLELTGDEATGRNIVLRALEEPVRQIAHNAGFEGSIVIDRLKNAELGIGFNAATGEWVNMIDQGIIDPVKVSRSALQNAASVASLILTTEAVVANKPEPVAPAPAMDPSMMGGMM</sequence>
<protein>
    <recommendedName>
        <fullName evidence="1">Chaperonin GroEL</fullName>
        <ecNumber evidence="1">5.6.1.7</ecNumber>
    </recommendedName>
    <alternativeName>
        <fullName evidence="1">60 kDa chaperonin</fullName>
    </alternativeName>
    <alternativeName>
        <fullName evidence="1">Chaperonin-60</fullName>
        <shortName evidence="1">Cpn60</shortName>
    </alternativeName>
</protein>